<reference key="1">
    <citation type="journal article" date="1999" name="Genetics">
        <title>Divergence of the hyperthermophilic archaea Pyrococcus furiosus and P. horikoshii inferred from complete genomic sequences.</title>
        <authorList>
            <person name="Maeder D.L."/>
            <person name="Weiss R.B."/>
            <person name="Dunn D.M."/>
            <person name="Cherry J.L."/>
            <person name="Gonzalez J.M."/>
            <person name="DiRuggiero J."/>
            <person name="Robb F.T."/>
        </authorList>
    </citation>
    <scope>NUCLEOTIDE SEQUENCE [LARGE SCALE GENOMIC DNA]</scope>
    <source>
        <strain>ATCC 43587 / DSM 3638 / JCM 8422 / Vc1</strain>
    </source>
</reference>
<reference evidence="4" key="2">
    <citation type="journal article" date="2013" name="Nucleic Acids Res.">
        <title>Promiscuous behaviour of archaeal ribosomal proteins: implications for eukaryotic ribosome evolution.</title>
        <authorList>
            <person name="Armache J.P."/>
            <person name="Anger A.M."/>
            <person name="Marquez V."/>
            <person name="Franckenberg S."/>
            <person name="Frohlich T."/>
            <person name="Villa E."/>
            <person name="Berninghausen O."/>
            <person name="Thomm M."/>
            <person name="Arnold G.J."/>
            <person name="Beckmann R."/>
            <person name="Wilson D.N."/>
        </authorList>
    </citation>
    <scope>STRUCTURE BY ELECTRON MICROSCOPY (6.60 ANGSTROMS) IN THE 70S RIBOSOME</scope>
    <scope>SUBUNIT</scope>
</reference>
<feature type="chain" id="PRO_0000137357" description="Small ribosomal subunit protein eS6">
    <location>
        <begin position="1"/>
        <end position="125"/>
    </location>
</feature>
<feature type="region of interest" description="Disordered" evidence="2">
    <location>
        <begin position="90"/>
        <end position="109"/>
    </location>
</feature>
<sequence length="125" mass="13976">MATFKLVISDPKSGIAKQVEITGAETEKLIGKRIGDQIPAKELNINLNELFGKEFPEDVKLEIRGGTDKDGFPMRPDIHGPRRVRVLLSKGPGFRPKEKGERRKKTVRGNTISPEIVQVNVKLVY</sequence>
<comment type="subunit">
    <text evidence="3">Part of the 30S ribosomal subunit.</text>
</comment>
<comment type="similarity">
    <text evidence="1">Belongs to the eukaryotic ribosomal protein eS6 family.</text>
</comment>
<keyword id="KW-0002">3D-structure</keyword>
<keyword id="KW-1185">Reference proteome</keyword>
<keyword id="KW-0687">Ribonucleoprotein</keyword>
<keyword id="KW-0689">Ribosomal protein</keyword>
<gene>
    <name evidence="1" type="primary">rps6e</name>
    <name type="ordered locus">PF0488</name>
</gene>
<organism>
    <name type="scientific">Pyrococcus furiosus (strain ATCC 43587 / DSM 3638 / JCM 8422 / Vc1)</name>
    <dbReference type="NCBI Taxonomy" id="186497"/>
    <lineage>
        <taxon>Archaea</taxon>
        <taxon>Methanobacteriati</taxon>
        <taxon>Methanobacteriota</taxon>
        <taxon>Thermococci</taxon>
        <taxon>Thermococcales</taxon>
        <taxon>Thermococcaceae</taxon>
        <taxon>Pyrococcus</taxon>
    </lineage>
</organism>
<protein>
    <recommendedName>
        <fullName evidence="1">Small ribosomal subunit protein eS6</fullName>
    </recommendedName>
    <alternativeName>
        <fullName>30S ribosomal protein S6e</fullName>
    </alternativeName>
</protein>
<accession>Q8U3H8</accession>
<name>RS6E_PYRFU</name>
<dbReference type="EMBL" id="AE009950">
    <property type="protein sequence ID" value="AAL80612.1"/>
    <property type="molecule type" value="Genomic_DNA"/>
</dbReference>
<dbReference type="RefSeq" id="WP_011011605.1">
    <property type="nucleotide sequence ID" value="NZ_CP023154.1"/>
</dbReference>
<dbReference type="PDB" id="4V4N">
    <property type="method" value="EM"/>
    <property type="resolution" value="9.00 A"/>
    <property type="chains" value="G=1-125"/>
</dbReference>
<dbReference type="PDB" id="4V6U">
    <property type="method" value="EM"/>
    <property type="resolution" value="6.60 A"/>
    <property type="chains" value="AG=1-125"/>
</dbReference>
<dbReference type="PDB" id="5JB3">
    <property type="method" value="EM"/>
    <property type="resolution" value="5.34 A"/>
    <property type="chains" value="G=1-125"/>
</dbReference>
<dbReference type="PDB" id="5JBH">
    <property type="method" value="EM"/>
    <property type="resolution" value="5.34 A"/>
    <property type="chains" value="G=1-125"/>
</dbReference>
<dbReference type="PDBsum" id="4V4N"/>
<dbReference type="PDBsum" id="4V6U"/>
<dbReference type="PDBsum" id="5JB3"/>
<dbReference type="PDBsum" id="5JBH"/>
<dbReference type="EMDB" id="EMD-50611"/>
<dbReference type="EMDB" id="EMD-50612"/>
<dbReference type="EMDB" id="EMD-50613"/>
<dbReference type="EMDB" id="EMD-8149"/>
<dbReference type="SMR" id="Q8U3H8"/>
<dbReference type="STRING" id="186497.PF0488"/>
<dbReference type="PaxDb" id="186497-PF0488"/>
<dbReference type="KEGG" id="pfu:PF0488"/>
<dbReference type="PATRIC" id="fig|186497.12.peg.511"/>
<dbReference type="eggNOG" id="arCOG01946">
    <property type="taxonomic scope" value="Archaea"/>
</dbReference>
<dbReference type="HOGENOM" id="CLU_109671_1_1_2"/>
<dbReference type="OrthoDB" id="7793at2157"/>
<dbReference type="PhylomeDB" id="Q8U3H8"/>
<dbReference type="Proteomes" id="UP000001013">
    <property type="component" value="Chromosome"/>
</dbReference>
<dbReference type="GO" id="GO:1990904">
    <property type="term" value="C:ribonucleoprotein complex"/>
    <property type="evidence" value="ECO:0007669"/>
    <property type="project" value="UniProtKB-KW"/>
</dbReference>
<dbReference type="GO" id="GO:0005840">
    <property type="term" value="C:ribosome"/>
    <property type="evidence" value="ECO:0007669"/>
    <property type="project" value="UniProtKB-KW"/>
</dbReference>
<dbReference type="GO" id="GO:0003735">
    <property type="term" value="F:structural constituent of ribosome"/>
    <property type="evidence" value="ECO:0007669"/>
    <property type="project" value="InterPro"/>
</dbReference>
<dbReference type="GO" id="GO:0006412">
    <property type="term" value="P:translation"/>
    <property type="evidence" value="ECO:0007669"/>
    <property type="project" value="UniProtKB-UniRule"/>
</dbReference>
<dbReference type="HAMAP" id="MF_00512">
    <property type="entry name" value="Ribosomal_eS6"/>
    <property type="match status" value="1"/>
</dbReference>
<dbReference type="InterPro" id="IPR001377">
    <property type="entry name" value="Ribosomal_eS6"/>
</dbReference>
<dbReference type="InterPro" id="IPR020924">
    <property type="entry name" value="Ribosomal_eS6_arc"/>
</dbReference>
<dbReference type="InterPro" id="IPR018282">
    <property type="entry name" value="Ribosomal_eS6_CS"/>
</dbReference>
<dbReference type="NCBIfam" id="NF003293">
    <property type="entry name" value="PRK04290.1-2"/>
    <property type="match status" value="1"/>
</dbReference>
<dbReference type="NCBIfam" id="NF003294">
    <property type="entry name" value="PRK04290.1-3"/>
    <property type="match status" value="1"/>
</dbReference>
<dbReference type="PANTHER" id="PTHR11502">
    <property type="entry name" value="40S RIBOSOMAL PROTEIN S6"/>
    <property type="match status" value="1"/>
</dbReference>
<dbReference type="Pfam" id="PF01092">
    <property type="entry name" value="Ribosomal_S6e"/>
    <property type="match status" value="1"/>
</dbReference>
<dbReference type="SMART" id="SM01405">
    <property type="entry name" value="Ribosomal_S6e"/>
    <property type="match status" value="1"/>
</dbReference>
<dbReference type="PROSITE" id="PS00578">
    <property type="entry name" value="RIBOSOMAL_S6E"/>
    <property type="match status" value="1"/>
</dbReference>
<proteinExistence type="evidence at protein level"/>
<evidence type="ECO:0000255" key="1">
    <source>
        <dbReference type="HAMAP-Rule" id="MF_00512"/>
    </source>
</evidence>
<evidence type="ECO:0000256" key="2">
    <source>
        <dbReference type="SAM" id="MobiDB-lite"/>
    </source>
</evidence>
<evidence type="ECO:0000269" key="3">
    <source>
    </source>
</evidence>
<evidence type="ECO:0007744" key="4">
    <source>
        <dbReference type="PDB" id="4V6U"/>
    </source>
</evidence>